<keyword id="KW-0067">ATP-binding</keyword>
<keyword id="KW-1003">Cell membrane</keyword>
<keyword id="KW-0868">Chloride</keyword>
<keyword id="KW-0869">Chloride channel</keyword>
<keyword id="KW-0256">Endoplasmic reticulum</keyword>
<keyword id="KW-0967">Endosome</keyword>
<keyword id="KW-0325">Glycoprotein</keyword>
<keyword id="KW-0407">Ion channel</keyword>
<keyword id="KW-0406">Ion transport</keyword>
<keyword id="KW-0413">Isomerase</keyword>
<keyword id="KW-1017">Isopeptide bond</keyword>
<keyword id="KW-0449">Lipoprotein</keyword>
<keyword id="KW-0472">Membrane</keyword>
<keyword id="KW-0547">Nucleotide-binding</keyword>
<keyword id="KW-0539">Nucleus</keyword>
<keyword id="KW-0564">Palmitate</keyword>
<keyword id="KW-0597">Phosphoprotein</keyword>
<keyword id="KW-1185">Reference proteome</keyword>
<keyword id="KW-0677">Repeat</keyword>
<keyword id="KW-0812">Transmembrane</keyword>
<keyword id="KW-1133">Transmembrane helix</keyword>
<keyword id="KW-0813">Transport</keyword>
<keyword id="KW-0832">Ubl conjugation</keyword>
<evidence type="ECO:0000250" key="1">
    <source>
        <dbReference type="UniProtKB" id="P13569"/>
    </source>
</evidence>
<evidence type="ECO:0000250" key="2">
    <source>
        <dbReference type="UniProtKB" id="P26361"/>
    </source>
</evidence>
<evidence type="ECO:0000250" key="3">
    <source>
        <dbReference type="UniProtKB" id="P34158"/>
    </source>
</evidence>
<evidence type="ECO:0000255" key="4"/>
<evidence type="ECO:0000255" key="5">
    <source>
        <dbReference type="PROSITE-ProRule" id="PRU00434"/>
    </source>
</evidence>
<evidence type="ECO:0000255" key="6">
    <source>
        <dbReference type="PROSITE-ProRule" id="PRU00441"/>
    </source>
</evidence>
<evidence type="ECO:0000256" key="7">
    <source>
        <dbReference type="SAM" id="MobiDB-lite"/>
    </source>
</evidence>
<evidence type="ECO:0000305" key="8"/>
<comment type="function">
    <text evidence="1 2">Epithelial ion channel that plays an important role in the regulation of epithelial ion and water transport and fluid homeostasis. Mediates the transport of chloride ions across the cell membrane (By similarity). Possesses an intrinsic ATPase activity and utilizes ATP to gate its channel; the passive flow of anions through the channel is gated by cycles of ATP binding and hydrolysis by the ATP-binding domains (By similarity). The ion channel is also permeable to HCO(3)(-); selectivity depends on the extracellular chloride concentration. Exerts its function also by modulating the activity of other ion channels and transporters. Contributes to the regulation of the pH and the ion content of the epithelial fluid layer. Modulates the activity of the epithelial sodium channel (ENaC) complex, in part by regulating the cell surface expression of the ENaC complex. May regulate bicarbonate secretion and salvage in epithelial cells by regulating the transporter SLC4A7. Can inhibit the chloride channel activity of ANO1 (By similarity). Plays a role in the chloride and bicarbonate homeostasis during sperm epididymal maturation and capacitation (By similarity).</text>
</comment>
<comment type="catalytic activity">
    <reaction evidence="1">
        <text>ATP + H2O + closed Cl(-) channel = ADP + phosphate + open Cl(-) channel.</text>
        <dbReference type="EC" id="5.6.1.6"/>
    </reaction>
</comment>
<comment type="catalytic activity">
    <reaction evidence="1">
        <text>chloride(in) = chloride(out)</text>
        <dbReference type="Rhea" id="RHEA:29823"/>
        <dbReference type="ChEBI" id="CHEBI:17996"/>
    </reaction>
</comment>
<comment type="catalytic activity">
    <reaction evidence="1">
        <text>hydrogencarbonate(in) = hydrogencarbonate(out)</text>
        <dbReference type="Rhea" id="RHEA:28695"/>
        <dbReference type="ChEBI" id="CHEBI:17544"/>
    </reaction>
</comment>
<comment type="catalytic activity">
    <reaction evidence="1">
        <text>ATP + H2O = ADP + phosphate + H(+)</text>
        <dbReference type="Rhea" id="RHEA:13065"/>
        <dbReference type="ChEBI" id="CHEBI:15377"/>
        <dbReference type="ChEBI" id="CHEBI:15378"/>
        <dbReference type="ChEBI" id="CHEBI:30616"/>
        <dbReference type="ChEBI" id="CHEBI:43474"/>
        <dbReference type="ChEBI" id="CHEBI:456216"/>
    </reaction>
    <physiologicalReaction direction="left-to-right" evidence="1">
        <dbReference type="Rhea" id="RHEA:13066"/>
    </physiologicalReaction>
</comment>
<comment type="subunit">
    <text evidence="1 2 3">Monomer; does not require oligomerization for channel activity. May form oligomers in the membrane (By similarity). Interacts with SLC26A3, SLC26A6 and NHERF1 (By similarity). Interacts with SHANK2 (By similarity). Interacts with MYO6 (By similarity). Interacts (via C-terminus) with GOPC (via PDZ domain); this promotes CFTR internalization and thereby decreases channel activity. Interacts with SLC4A7 through NHERF1. Found in a complex with MYO5B and RAB11A. Interacts with ANO1. Interacts with SLC26A8 (By similarity). Interacts with AHCYL1; the interaction increases CFTR activity (By similarity). Interacts with CSE1L (By similarity). The core-glycosylated form interacts with GORASP2 (via PDZ GRASP-type 1 domain) in respone to ER stress (By similarity). Interacts with MARCHF2; the interaction leads to CFTR ubiqtuitination and degradation (By similarity). Interacts with ADGRG2 (By similarity).</text>
</comment>
<comment type="subcellular location">
    <subcellularLocation>
        <location evidence="2">Apical cell membrane</location>
        <topology evidence="1">Multi-pass membrane protein</topology>
    </subcellularLocation>
    <subcellularLocation>
        <location evidence="1">Early endosome membrane</location>
        <topology evidence="1">Multi-pass membrane protein</topology>
    </subcellularLocation>
    <subcellularLocation>
        <location evidence="2">Cell membrane</location>
        <topology evidence="1">Multi-pass membrane protein</topology>
    </subcellularLocation>
    <subcellularLocation>
        <location evidence="1">Recycling endosome membrane</location>
        <topology evidence="1">Multi-pass membrane protein</topology>
    </subcellularLocation>
    <subcellularLocation>
        <location evidence="1">Endoplasmic reticulum membrane</location>
        <topology evidence="1">Multi-pass membrane protein</topology>
    </subcellularLocation>
    <subcellularLocation>
        <location evidence="3">Nucleus</location>
    </subcellularLocation>
    <text evidence="1 3">The channel is internalized from the cell surface into an endosomal recycling compartment, from where it is recycled to the cell membrane. In the oviduct and bronchus, detected on the apical side of epithelial cells, but not associated with cilia. In Sertoli cells, a processed product is detected in the nucleus. ER stress induces GORASP2-mediated unconventional (ER/Golgi-independent) trafficking of core-glycosylated CFTR to cell membrane.</text>
</comment>
<comment type="domain">
    <text evidence="1 2">Binds and hydrolyzes ATP via the two cytoplasmic ABC transporter nucleotide-binding domains. The two ATP-binding domains interact with each other, forming a head-to-tail dimer. Normal ATPase activity requires interaction between the two domains. The first ABC transporter nucleotide-binding domain has no ATPase activity by itself.</text>
</comment>
<comment type="domain">
    <text evidence="1">The PDZ-binding motif mediates interactions with GOPC and with the SLC4A7, NHERF1/EBP50 complex.</text>
</comment>
<comment type="domain">
    <text evidence="1">The disordered R region mediates channel activation when it is phosphorylated, but not in the absence of phosphorylation.</text>
</comment>
<comment type="PTM">
    <text evidence="1">N-glycosylated.</text>
</comment>
<comment type="PTM">
    <text evidence="1">Phosphorylated; cAMP treatment promotes phosphorylation and activates the channel. Dephosphorylation decreases the ATPase activity (in vitro). Phosphorylation at PKA sites activates the channel. Phosphorylation at PKC sites enhances the response to phosphorylation by PKA. Phosphorylated by AMPK; this inhibits channel activity.</text>
</comment>
<comment type="PTM">
    <text evidence="1">Ubiquitinated, leading to its degradation in the lysosome. Deubiquitination by USP10 in early endosomes enhances its endocytic recycling to the cell membrane. Ubiquitinated by RNF185 during ER stress. Ubiquitinated by MARCHF2 (By similarity).</text>
</comment>
<comment type="similarity">
    <text evidence="8">Belongs to the ABC transporter superfamily. ABCC family. CFTR transporter (TC 3.A.1.202) subfamily.</text>
</comment>
<sequence length="1484" mass="168516">MQRSPLEKASVLSKLFFSWTRPILTKGYRQRLELSDIYQIPSADSADNLSEKLEREWDRELASKKNPKLINALRRCFFWRFMFYGIILYLGEVTKSVQPLLLGRIIASYDPDNKEERSIAIYLGIGLCLLFVMRTLLLHPAIFGLHRIGMQMRIAMFSLIYKKTLKLSSRVLDKISIGQLVSLLSNNLNKFDEGLALAHFVWIAPLQVTLLMGLLWDLLQASAFCGLAFLIVLALFQAGLGRMMMKYRDQRAGKINERLVITSEMIENIQSVKAYCWEEAMEKMIESIRQTELKLTRKAAYVRYFNSSAFFFSGFFVVFLSVLPYALIKTIVLRKIFTTISFCIVLRMAVTRQFPWAVQTWYDSLGAINKIQDFLQKQEYKTLEYNLTTTEVVMENVTAFWEEGFGELLEKAKQNSNDRKISNADNSLFFSNFSLLGAPVLKDISFKIERGQLLAVAGSTGAGKTSLLMMIMGELEPSEGKIKHSGRISFCSQFSWIMPGTIKENIIFGVSYDEYRYRSVIKACQLEEDISKFAEKDNIVLGEGGITLSGGQRARISLARAVYKDADLYLLDSPFGYLDVLTEKEIFESCVCKLMANKTRILVTSKMEHLKKADKILILHEGSCYFYGTFSELQNLRPDFSSKLMGYDSFDQFSAERRNSIITETLRRFSLEGDAPVSWNETKKQSFKQTGEFGEKRKNSILNPVNSIRKFSVVQKTPLQMNGIEEDSDEPLERRLSLVPDGAEQGEAILPRSNMINTGPTLQRQRRQSVLNLMTCSPGNQGQSFHGRTASSTRKMSLAPQANLTEMDIYSRRLSQDSGLEISEEINEEDLKECFIDDVESIPPVTTWNTYLRYVTIHKSLVFVLIWCLVIFLAEVAISLVVLWLLKKTASQDKGNSTQSINSSYTVIFTSTSTYYVFYIYVGVADTLLALGFFRGLPLVHTLITVSKILHHKMLHAVLQAPMSTLNALKAGGILNRFSKDIAILDDLLPLTIFDFVQLLLIVIGAVTVVSALQPYIFLATVPVIAAFIMLRAYFLHTSQQLKQLESEGRSPIFTHLVTSLKGLWTLRAFGRQPYFETLFHKALNLHTANWFLYLSTLRWFQMRMEIIFVIFFIAITFISILTTGEGVGAVGIILTLAMNIMGTLQWAVNSSIDVDSLMRSVSRVFKFIDMPAEESKPPTKSFKPSKDVQLSKVLITENHHVREDDIWPSGGQMTVKDLTAKYIDGGNAILENISFSISPGQRVGLLGRTGSGKSTLLSAFLRLLNTEGEIQIDGVSWDSITLQEWRKAFGVIPQKVFIFSGTFRKNLDPYGQWNDQEIWKVADEVGLRSVIEQFPGKLDFVLVDGGCVLSHGHKQLMCLARSVLSKAKILLLDEPSAHLDPITYQIIRRTLKQAFADCTVILSEHRIEAMLECQRFLVIEENKVRQYDSLQRLLSEKSLFRQAISPSDRLRFFPHRNSSKHKSRSQIAALKEETEEEVQETRL</sequence>
<proteinExistence type="inferred from homology"/>
<gene>
    <name evidence="1" type="primary">CFTR</name>
    <name type="synonym">ABCC7</name>
</gene>
<reference key="1">
    <citation type="submission" date="2006-09" db="EMBL/GenBank/DDBJ databases">
        <title>NISC comparative sequencing initiative.</title>
        <authorList>
            <person name="Antonellis A."/>
            <person name="Ayele K."/>
            <person name="Benjamin B."/>
            <person name="Blakesley R.W."/>
            <person name="Boakye A."/>
            <person name="Bouffard G.G."/>
            <person name="Brinkley C."/>
            <person name="Brooks S."/>
            <person name="Chu G."/>
            <person name="Coleman H."/>
            <person name="Engle J."/>
            <person name="Gestole M."/>
            <person name="Greene A."/>
            <person name="Guan X."/>
            <person name="Gupta J."/>
            <person name="Haghighi P."/>
            <person name="Han J."/>
            <person name="Hansen N."/>
            <person name="Ho S.-L."/>
            <person name="Hu P."/>
            <person name="Hunter G."/>
            <person name="Hurle B."/>
            <person name="Idol J.R."/>
            <person name="Kwong P."/>
            <person name="Laric P."/>
            <person name="Larson S."/>
            <person name="Lee-Lin S.-Q."/>
            <person name="Legaspi R."/>
            <person name="Madden M."/>
            <person name="Maduro Q.L."/>
            <person name="Maduro V.B."/>
            <person name="Margulies E.H."/>
            <person name="Masiello C."/>
            <person name="Maskeri B."/>
            <person name="McDowell J."/>
            <person name="Mojidi H.A."/>
            <person name="Mullikin J.C."/>
            <person name="Oestreicher J.S."/>
            <person name="Park M."/>
            <person name="Portnoy M.E."/>
            <person name="Prasad A."/>
            <person name="Puri O."/>
            <person name="Reddix-Dugue N."/>
            <person name="Schandler K."/>
            <person name="Schueler M.G."/>
            <person name="Sison C."/>
            <person name="Stantripop S."/>
            <person name="Stephen E."/>
            <person name="Taye A."/>
            <person name="Thomas J.W."/>
            <person name="Thomas P.J."/>
            <person name="Tsipouri V."/>
            <person name="Ung L."/>
            <person name="Vogt J.L."/>
            <person name="Wetherby K.D."/>
            <person name="Young A."/>
            <person name="Green E.D."/>
        </authorList>
    </citation>
    <scope>NUCLEOTIDE SEQUENCE [LARGE SCALE GENOMIC DNA]</scope>
</reference>
<dbReference type="EC" id="5.6.1.6" evidence="1"/>
<dbReference type="EMBL" id="DP000183">
    <property type="protein sequence ID" value="ABI93660.1"/>
    <property type="molecule type" value="Genomic_DNA"/>
</dbReference>
<dbReference type="RefSeq" id="XP_004741961.1">
    <property type="nucleotide sequence ID" value="XM_004741904.2"/>
</dbReference>
<dbReference type="SMR" id="Q07E16"/>
<dbReference type="FunCoup" id="Q07E16">
    <property type="interactions" value="22"/>
</dbReference>
<dbReference type="STRING" id="9669.ENSMPUP00000007081"/>
<dbReference type="GlyCosmos" id="Q07E16">
    <property type="glycosylation" value="2 sites, No reported glycans"/>
</dbReference>
<dbReference type="GeneID" id="101672484"/>
<dbReference type="KEGG" id="mpuf:101672484"/>
<dbReference type="CTD" id="1080"/>
<dbReference type="eggNOG" id="KOG0054">
    <property type="taxonomic scope" value="Eukaryota"/>
</dbReference>
<dbReference type="HOGENOM" id="CLU_000604_27_1_1"/>
<dbReference type="InParanoid" id="Q07E16"/>
<dbReference type="OMA" id="CQRYLVI"/>
<dbReference type="OrthoDB" id="6500128at2759"/>
<dbReference type="Proteomes" id="UP000000715">
    <property type="component" value="Unplaced"/>
</dbReference>
<dbReference type="GO" id="GO:0016324">
    <property type="term" value="C:apical plasma membrane"/>
    <property type="evidence" value="ECO:0000250"/>
    <property type="project" value="UniProtKB"/>
</dbReference>
<dbReference type="GO" id="GO:0009986">
    <property type="term" value="C:cell surface"/>
    <property type="evidence" value="ECO:0007669"/>
    <property type="project" value="Ensembl"/>
</dbReference>
<dbReference type="GO" id="GO:0034707">
    <property type="term" value="C:chloride channel complex"/>
    <property type="evidence" value="ECO:0007669"/>
    <property type="project" value="UniProtKB-KW"/>
</dbReference>
<dbReference type="GO" id="GO:0005829">
    <property type="term" value="C:cytosol"/>
    <property type="evidence" value="ECO:0007669"/>
    <property type="project" value="Ensembl"/>
</dbReference>
<dbReference type="GO" id="GO:0005769">
    <property type="term" value="C:early endosome"/>
    <property type="evidence" value="ECO:0000250"/>
    <property type="project" value="UniProtKB"/>
</dbReference>
<dbReference type="GO" id="GO:0031901">
    <property type="term" value="C:early endosome membrane"/>
    <property type="evidence" value="ECO:0007669"/>
    <property type="project" value="UniProtKB-SubCell"/>
</dbReference>
<dbReference type="GO" id="GO:0005789">
    <property type="term" value="C:endoplasmic reticulum membrane"/>
    <property type="evidence" value="ECO:0000250"/>
    <property type="project" value="UniProtKB"/>
</dbReference>
<dbReference type="GO" id="GO:0016020">
    <property type="term" value="C:membrane"/>
    <property type="evidence" value="ECO:0000250"/>
    <property type="project" value="UniProtKB"/>
</dbReference>
<dbReference type="GO" id="GO:0005634">
    <property type="term" value="C:nucleus"/>
    <property type="evidence" value="ECO:0000250"/>
    <property type="project" value="UniProtKB"/>
</dbReference>
<dbReference type="GO" id="GO:0005886">
    <property type="term" value="C:plasma membrane"/>
    <property type="evidence" value="ECO:0000250"/>
    <property type="project" value="UniProtKB"/>
</dbReference>
<dbReference type="GO" id="GO:0055038">
    <property type="term" value="C:recycling endosome membrane"/>
    <property type="evidence" value="ECO:0007669"/>
    <property type="project" value="UniProtKB-SubCell"/>
</dbReference>
<dbReference type="GO" id="GO:0071889">
    <property type="term" value="F:14-3-3 protein binding"/>
    <property type="evidence" value="ECO:0007669"/>
    <property type="project" value="Ensembl"/>
</dbReference>
<dbReference type="GO" id="GO:0140359">
    <property type="term" value="F:ABC-type transporter activity"/>
    <property type="evidence" value="ECO:0007669"/>
    <property type="project" value="InterPro"/>
</dbReference>
<dbReference type="GO" id="GO:0005524">
    <property type="term" value="F:ATP binding"/>
    <property type="evidence" value="ECO:0007669"/>
    <property type="project" value="UniProtKB-KW"/>
</dbReference>
<dbReference type="GO" id="GO:0016887">
    <property type="term" value="F:ATP hydrolysis activity"/>
    <property type="evidence" value="ECO:0000250"/>
    <property type="project" value="UniProtKB"/>
</dbReference>
<dbReference type="GO" id="GO:0015106">
    <property type="term" value="F:bicarbonate transmembrane transporter activity"/>
    <property type="evidence" value="ECO:0000250"/>
    <property type="project" value="UniProtKB"/>
</dbReference>
<dbReference type="GO" id="GO:0005254">
    <property type="term" value="F:chloride channel activity"/>
    <property type="evidence" value="ECO:0000250"/>
    <property type="project" value="UniProtKB"/>
</dbReference>
<dbReference type="GO" id="GO:0019869">
    <property type="term" value="F:chloride channel inhibitor activity"/>
    <property type="evidence" value="ECO:0000250"/>
    <property type="project" value="UniProtKB"/>
</dbReference>
<dbReference type="GO" id="GO:0015108">
    <property type="term" value="F:chloride transmembrane transporter activity"/>
    <property type="evidence" value="ECO:0000250"/>
    <property type="project" value="UniProtKB"/>
</dbReference>
<dbReference type="GO" id="GO:0019899">
    <property type="term" value="F:enzyme binding"/>
    <property type="evidence" value="ECO:0007669"/>
    <property type="project" value="Ensembl"/>
</dbReference>
<dbReference type="GO" id="GO:0005260">
    <property type="term" value="F:intracellularly ATP-gated chloride channel activity"/>
    <property type="evidence" value="ECO:0000250"/>
    <property type="project" value="UniProtKB"/>
</dbReference>
<dbReference type="GO" id="GO:0030165">
    <property type="term" value="F:PDZ domain binding"/>
    <property type="evidence" value="ECO:0007669"/>
    <property type="project" value="Ensembl"/>
</dbReference>
<dbReference type="GO" id="GO:0051087">
    <property type="term" value="F:protein-folding chaperone binding"/>
    <property type="evidence" value="ECO:0007669"/>
    <property type="project" value="Ensembl"/>
</dbReference>
<dbReference type="GO" id="GO:0106138">
    <property type="term" value="F:Sec61 translocon complex binding"/>
    <property type="evidence" value="ECO:0007669"/>
    <property type="project" value="Ensembl"/>
</dbReference>
<dbReference type="GO" id="GO:0097186">
    <property type="term" value="P:amelogenesis"/>
    <property type="evidence" value="ECO:0007669"/>
    <property type="project" value="Ensembl"/>
</dbReference>
<dbReference type="GO" id="GO:0015701">
    <property type="term" value="P:bicarbonate transport"/>
    <property type="evidence" value="ECO:0000250"/>
    <property type="project" value="UniProtKB"/>
</dbReference>
<dbReference type="GO" id="GO:0071320">
    <property type="term" value="P:cellular response to cAMP"/>
    <property type="evidence" value="ECO:0000250"/>
    <property type="project" value="UniProtKB"/>
</dbReference>
<dbReference type="GO" id="GO:1904322">
    <property type="term" value="P:cellular response to forskolin"/>
    <property type="evidence" value="ECO:0000250"/>
    <property type="project" value="UniProtKB"/>
</dbReference>
<dbReference type="GO" id="GO:1902476">
    <property type="term" value="P:chloride transmembrane transport"/>
    <property type="evidence" value="ECO:0000250"/>
    <property type="project" value="UniProtKB"/>
</dbReference>
<dbReference type="GO" id="GO:0006695">
    <property type="term" value="P:cholesterol biosynthetic process"/>
    <property type="evidence" value="ECO:0007669"/>
    <property type="project" value="Ensembl"/>
</dbReference>
<dbReference type="GO" id="GO:0030301">
    <property type="term" value="P:cholesterol transport"/>
    <property type="evidence" value="ECO:0007669"/>
    <property type="project" value="Ensembl"/>
</dbReference>
<dbReference type="GO" id="GO:0051649">
    <property type="term" value="P:establishment of localization in cell"/>
    <property type="evidence" value="ECO:0007669"/>
    <property type="project" value="Ensembl"/>
</dbReference>
<dbReference type="GO" id="GO:0051454">
    <property type="term" value="P:intracellular pH elevation"/>
    <property type="evidence" value="ECO:0000250"/>
    <property type="project" value="UniProtKB"/>
</dbReference>
<dbReference type="GO" id="GO:0060081">
    <property type="term" value="P:membrane hyperpolarization"/>
    <property type="evidence" value="ECO:0000250"/>
    <property type="project" value="UniProtKB"/>
</dbReference>
<dbReference type="GO" id="GO:0050891">
    <property type="term" value="P:multicellular organismal-level water homeostasis"/>
    <property type="evidence" value="ECO:0000250"/>
    <property type="project" value="UniProtKB"/>
</dbReference>
<dbReference type="GO" id="GO:0070175">
    <property type="term" value="P:positive regulation of enamel mineralization"/>
    <property type="evidence" value="ECO:0007669"/>
    <property type="project" value="Ensembl"/>
</dbReference>
<dbReference type="GO" id="GO:0045921">
    <property type="term" value="P:positive regulation of exocytosis"/>
    <property type="evidence" value="ECO:0007669"/>
    <property type="project" value="Ensembl"/>
</dbReference>
<dbReference type="GO" id="GO:0035774">
    <property type="term" value="P:positive regulation of insulin secretion involved in cellular response to glucose stimulus"/>
    <property type="evidence" value="ECO:0007669"/>
    <property type="project" value="Ensembl"/>
</dbReference>
<dbReference type="GO" id="GO:0034976">
    <property type="term" value="P:response to endoplasmic reticulum stress"/>
    <property type="evidence" value="ECO:0000250"/>
    <property type="project" value="UniProtKB"/>
</dbReference>
<dbReference type="GO" id="GO:0048240">
    <property type="term" value="P:sperm capacitation"/>
    <property type="evidence" value="ECO:0000250"/>
    <property type="project" value="UniProtKB"/>
</dbReference>
<dbReference type="GO" id="GO:0035377">
    <property type="term" value="P:transepithelial water transport"/>
    <property type="evidence" value="ECO:0000250"/>
    <property type="project" value="UniProtKB"/>
</dbReference>
<dbReference type="GO" id="GO:0006904">
    <property type="term" value="P:vesicle docking involved in exocytosis"/>
    <property type="evidence" value="ECO:0007669"/>
    <property type="project" value="Ensembl"/>
</dbReference>
<dbReference type="CDD" id="cd18594">
    <property type="entry name" value="ABC_6TM_CFTR_D1"/>
    <property type="match status" value="1"/>
</dbReference>
<dbReference type="CDD" id="cd18600">
    <property type="entry name" value="ABC_6TM_CFTR_D2"/>
    <property type="match status" value="1"/>
</dbReference>
<dbReference type="CDD" id="cd03291">
    <property type="entry name" value="ABCC_CFTR1"/>
    <property type="match status" value="1"/>
</dbReference>
<dbReference type="CDD" id="cd03289">
    <property type="entry name" value="ABCC_CFTR2"/>
    <property type="match status" value="1"/>
</dbReference>
<dbReference type="FunFam" id="1.20.1560.10:FF:000017">
    <property type="entry name" value="Cystic fibrosis transmembrane conductance regulator"/>
    <property type="match status" value="1"/>
</dbReference>
<dbReference type="FunFam" id="1.20.1560.10:FF:000019">
    <property type="entry name" value="Cystic fibrosis transmembrane conductance regulator"/>
    <property type="match status" value="1"/>
</dbReference>
<dbReference type="FunFam" id="3.40.50.300:FF:000581">
    <property type="entry name" value="Cystic fibrosis transmembrane conductance regulator"/>
    <property type="match status" value="1"/>
</dbReference>
<dbReference type="FunFam" id="3.40.50.300:FF:000591">
    <property type="entry name" value="Cystic fibrosis transmembrane conductance regulator"/>
    <property type="match status" value="1"/>
</dbReference>
<dbReference type="Gene3D" id="1.20.1560.10">
    <property type="entry name" value="ABC transporter type 1, transmembrane domain"/>
    <property type="match status" value="2"/>
</dbReference>
<dbReference type="Gene3D" id="3.40.50.300">
    <property type="entry name" value="P-loop containing nucleotide triphosphate hydrolases"/>
    <property type="match status" value="2"/>
</dbReference>
<dbReference type="InterPro" id="IPR003593">
    <property type="entry name" value="AAA+_ATPase"/>
</dbReference>
<dbReference type="InterPro" id="IPR011527">
    <property type="entry name" value="ABC1_TM_dom"/>
</dbReference>
<dbReference type="InterPro" id="IPR036640">
    <property type="entry name" value="ABC1_TM_sf"/>
</dbReference>
<dbReference type="InterPro" id="IPR003439">
    <property type="entry name" value="ABC_transporter-like_ATP-bd"/>
</dbReference>
<dbReference type="InterPro" id="IPR017871">
    <property type="entry name" value="ABC_transporter-like_CS"/>
</dbReference>
<dbReference type="InterPro" id="IPR050173">
    <property type="entry name" value="ABC_transporter_C-like"/>
</dbReference>
<dbReference type="InterPro" id="IPR009147">
    <property type="entry name" value="CFTR/ABCC7"/>
</dbReference>
<dbReference type="InterPro" id="IPR047082">
    <property type="entry name" value="CFTR1_ATP-bd_dom1"/>
</dbReference>
<dbReference type="InterPro" id="IPR025837">
    <property type="entry name" value="CFTR_reg_dom"/>
</dbReference>
<dbReference type="InterPro" id="IPR027417">
    <property type="entry name" value="P-loop_NTPase"/>
</dbReference>
<dbReference type="NCBIfam" id="TIGR01271">
    <property type="entry name" value="CFTR_protein"/>
    <property type="match status" value="1"/>
</dbReference>
<dbReference type="PANTHER" id="PTHR24223">
    <property type="entry name" value="ATP-BINDING CASSETTE SUB-FAMILY C"/>
    <property type="match status" value="1"/>
</dbReference>
<dbReference type="PANTHER" id="PTHR24223:SF19">
    <property type="entry name" value="CYSTIC FIBROSIS TRANSMEMBRANE CONDUCTANCE REGULATOR"/>
    <property type="match status" value="1"/>
</dbReference>
<dbReference type="Pfam" id="PF00664">
    <property type="entry name" value="ABC_membrane"/>
    <property type="match status" value="2"/>
</dbReference>
<dbReference type="Pfam" id="PF00005">
    <property type="entry name" value="ABC_tran"/>
    <property type="match status" value="2"/>
</dbReference>
<dbReference type="Pfam" id="PF14396">
    <property type="entry name" value="CFTR_R"/>
    <property type="match status" value="1"/>
</dbReference>
<dbReference type="PRINTS" id="PR01851">
    <property type="entry name" value="CYSFIBREGLTR"/>
</dbReference>
<dbReference type="SMART" id="SM00382">
    <property type="entry name" value="AAA"/>
    <property type="match status" value="2"/>
</dbReference>
<dbReference type="SUPFAM" id="SSF90123">
    <property type="entry name" value="ABC transporter transmembrane region"/>
    <property type="match status" value="2"/>
</dbReference>
<dbReference type="SUPFAM" id="SSF52540">
    <property type="entry name" value="P-loop containing nucleoside triphosphate hydrolases"/>
    <property type="match status" value="2"/>
</dbReference>
<dbReference type="PROSITE" id="PS50929">
    <property type="entry name" value="ABC_TM1F"/>
    <property type="match status" value="2"/>
</dbReference>
<dbReference type="PROSITE" id="PS00211">
    <property type="entry name" value="ABC_TRANSPORTER_1"/>
    <property type="match status" value="1"/>
</dbReference>
<dbReference type="PROSITE" id="PS50893">
    <property type="entry name" value="ABC_TRANSPORTER_2"/>
    <property type="match status" value="2"/>
</dbReference>
<accession>Q07E16</accession>
<organism>
    <name type="scientific">Mustela putorius furo</name>
    <name type="common">European domestic ferret</name>
    <name type="synonym">Mustela furo</name>
    <dbReference type="NCBI Taxonomy" id="9669"/>
    <lineage>
        <taxon>Eukaryota</taxon>
        <taxon>Metazoa</taxon>
        <taxon>Chordata</taxon>
        <taxon>Craniata</taxon>
        <taxon>Vertebrata</taxon>
        <taxon>Euteleostomi</taxon>
        <taxon>Mammalia</taxon>
        <taxon>Eutheria</taxon>
        <taxon>Laurasiatheria</taxon>
        <taxon>Carnivora</taxon>
        <taxon>Caniformia</taxon>
        <taxon>Musteloidea</taxon>
        <taxon>Mustelidae</taxon>
        <taxon>Mustelinae</taxon>
        <taxon>Mustela</taxon>
    </lineage>
</organism>
<feature type="chain" id="PRO_0000260778" description="Cystic fibrosis transmembrane conductance regulator">
    <location>
        <begin position="1"/>
        <end position="1484"/>
    </location>
</feature>
<feature type="topological domain" description="Cytoplasmic" evidence="1">
    <location>
        <begin position="1"/>
        <end position="77"/>
    </location>
</feature>
<feature type="transmembrane region" description="Helical; Name=1" evidence="1">
    <location>
        <begin position="78"/>
        <end position="98"/>
    </location>
</feature>
<feature type="topological domain" description="Extracellular" evidence="1">
    <location>
        <begin position="99"/>
        <end position="122"/>
    </location>
</feature>
<feature type="transmembrane region" description="Helical; Name=2" evidence="1">
    <location>
        <begin position="123"/>
        <end position="146"/>
    </location>
</feature>
<feature type="topological domain" description="Cytoplasmic" evidence="1">
    <location>
        <begin position="147"/>
        <end position="195"/>
    </location>
</feature>
<feature type="transmembrane region" description="Helical; Name=3" evidence="1">
    <location>
        <begin position="196"/>
        <end position="216"/>
    </location>
</feature>
<feature type="topological domain" description="Extracellular" evidence="1">
    <location>
        <begin position="217"/>
        <end position="222"/>
    </location>
</feature>
<feature type="transmembrane region" description="Helical; Name=4" evidence="1">
    <location>
        <begin position="223"/>
        <end position="243"/>
    </location>
</feature>
<feature type="topological domain" description="Cytoplasmic" evidence="1">
    <location>
        <begin position="244"/>
        <end position="298"/>
    </location>
</feature>
<feature type="transmembrane region" description="Helical; Name=5" evidence="1">
    <location>
        <begin position="299"/>
        <end position="319"/>
    </location>
</feature>
<feature type="topological domain" description="Extracellular" evidence="1">
    <location>
        <begin position="320"/>
        <end position="339"/>
    </location>
</feature>
<feature type="transmembrane region" description="Helical; Name=6" evidence="1">
    <location>
        <begin position="340"/>
        <end position="358"/>
    </location>
</feature>
<feature type="topological domain" description="Cytoplasmic" evidence="1">
    <location>
        <begin position="359"/>
        <end position="860"/>
    </location>
</feature>
<feature type="transmembrane region" description="Helical; Name=7" evidence="1">
    <location>
        <begin position="861"/>
        <end position="881"/>
    </location>
</feature>
<feature type="topological domain" description="Extracellular" evidence="1">
    <location>
        <begin position="882"/>
        <end position="920"/>
    </location>
</feature>
<feature type="transmembrane region" description="Discontinuously helical; Name=8" evidence="1">
    <location>
        <begin position="921"/>
        <end position="941"/>
    </location>
</feature>
<feature type="topological domain" description="Cytoplasmic" evidence="1">
    <location>
        <begin position="942"/>
        <end position="992"/>
    </location>
</feature>
<feature type="transmembrane region" description="Helical; Name=9" evidence="1">
    <location>
        <begin position="993"/>
        <end position="1013"/>
    </location>
</feature>
<feature type="topological domain" description="Extracellular" evidence="1">
    <location>
        <begin position="1014"/>
        <end position="1015"/>
    </location>
</feature>
<feature type="transmembrane region" description="Helical; Name=10" evidence="1">
    <location>
        <begin position="1016"/>
        <end position="1036"/>
    </location>
</feature>
<feature type="topological domain" description="Cytoplasmic" evidence="1">
    <location>
        <begin position="1037"/>
        <end position="1097"/>
    </location>
</feature>
<feature type="transmembrane region" description="Helical; Name=11" evidence="1">
    <location>
        <begin position="1098"/>
        <end position="1118"/>
    </location>
</feature>
<feature type="topological domain" description="Extracellular" evidence="1">
    <location>
        <begin position="1119"/>
        <end position="1132"/>
    </location>
</feature>
<feature type="transmembrane region" description="Helical; Name=12" evidence="1">
    <location>
        <begin position="1133"/>
        <end position="1153"/>
    </location>
</feature>
<feature type="topological domain" description="Cytoplasmic" evidence="1">
    <location>
        <begin position="1154"/>
        <end position="1484"/>
    </location>
</feature>
<feature type="domain" description="ABC transmembrane type-1 1" evidence="6">
    <location>
        <begin position="81"/>
        <end position="365"/>
    </location>
</feature>
<feature type="domain" description="ABC transporter 1" evidence="5">
    <location>
        <begin position="423"/>
        <end position="646"/>
    </location>
</feature>
<feature type="domain" description="ABC transmembrane type-1 2" evidence="6">
    <location>
        <begin position="861"/>
        <end position="1157"/>
    </location>
</feature>
<feature type="domain" description="ABC transporter 2" evidence="5">
    <location>
        <begin position="1214"/>
        <end position="1447"/>
    </location>
</feature>
<feature type="region of interest" description="Disordered R region" evidence="1">
    <location>
        <begin position="654"/>
        <end position="833"/>
    </location>
</feature>
<feature type="region of interest" description="Interaction with GORASP2" evidence="1">
    <location>
        <begin position="1390"/>
        <end position="1484"/>
    </location>
</feature>
<feature type="region of interest" description="Disordered" evidence="7">
    <location>
        <begin position="1456"/>
        <end position="1484"/>
    </location>
</feature>
<feature type="short sequence motif" description="PDZ-binding" evidence="1">
    <location>
        <begin position="1482"/>
        <end position="1484"/>
    </location>
</feature>
<feature type="compositionally biased region" description="Basic residues" evidence="7">
    <location>
        <begin position="1456"/>
        <end position="1465"/>
    </location>
</feature>
<feature type="compositionally biased region" description="Acidic residues" evidence="7">
    <location>
        <begin position="1474"/>
        <end position="1484"/>
    </location>
</feature>
<feature type="binding site" evidence="1">
    <location>
        <position position="401"/>
    </location>
    <ligand>
        <name>ATP</name>
        <dbReference type="ChEBI" id="CHEBI:30616"/>
        <label>1</label>
    </ligand>
</feature>
<feature type="binding site" evidence="1">
    <location>
        <position position="434"/>
    </location>
    <ligand>
        <name>ATP</name>
        <dbReference type="ChEBI" id="CHEBI:30616"/>
        <label>1</label>
    </ligand>
</feature>
<feature type="binding site" evidence="5">
    <location>
        <begin position="458"/>
        <end position="465"/>
    </location>
    <ligand>
        <name>ATP</name>
        <dbReference type="ChEBI" id="CHEBI:30616"/>
        <label>1</label>
    </ligand>
</feature>
<feature type="binding site" evidence="2">
    <location>
        <position position="493"/>
    </location>
    <ligand>
        <name>ATP</name>
        <dbReference type="ChEBI" id="CHEBI:30616"/>
        <label>1</label>
    </ligand>
</feature>
<feature type="binding site" evidence="1">
    <location>
        <position position="1223"/>
    </location>
    <ligand>
        <name>ATP</name>
        <dbReference type="ChEBI" id="CHEBI:30616"/>
        <label>2</label>
    </ligand>
</feature>
<feature type="binding site" evidence="5">
    <location>
        <begin position="1248"/>
        <end position="1255"/>
    </location>
    <ligand>
        <name>ATP</name>
        <dbReference type="ChEBI" id="CHEBI:30616"/>
        <label>2</label>
    </ligand>
</feature>
<feature type="modified residue" description="Phosphoserine" evidence="1">
    <location>
        <position position="549"/>
    </location>
</feature>
<feature type="modified residue" description="Phosphoserine" evidence="1">
    <location>
        <position position="660"/>
    </location>
</feature>
<feature type="modified residue" description="Phosphoserine; by PKA" evidence="1">
    <location>
        <position position="670"/>
    </location>
</feature>
<feature type="modified residue" description="Phosphoserine" evidence="1">
    <location>
        <position position="686"/>
    </location>
</feature>
<feature type="modified residue" description="Phosphoserine" evidence="1">
    <location>
        <position position="700"/>
    </location>
</feature>
<feature type="modified residue" description="Phosphoserine" evidence="1">
    <location>
        <position position="712"/>
    </location>
</feature>
<feature type="modified residue" description="Phosphothreonine" evidence="1">
    <location>
        <position position="717"/>
    </location>
</feature>
<feature type="modified residue" description="Phosphoserine" evidence="1">
    <location>
        <position position="737"/>
    </location>
</feature>
<feature type="modified residue" description="Phosphoserine" evidence="1">
    <location>
        <position position="769"/>
    </location>
</feature>
<feature type="modified residue" description="Phosphoserine" evidence="1">
    <location>
        <position position="792"/>
    </location>
</feature>
<feature type="modified residue" description="Phosphoserine" evidence="1">
    <location>
        <position position="797"/>
    </location>
</feature>
<feature type="modified residue" description="Phosphoserine" evidence="1">
    <location>
        <position position="815"/>
    </location>
</feature>
<feature type="modified residue" description="Phosphoserine" evidence="1">
    <location>
        <position position="1448"/>
    </location>
</feature>
<feature type="modified residue" description="Phosphoserine" evidence="1">
    <location>
        <position position="1460"/>
    </location>
</feature>
<feature type="lipid moiety-binding region" description="S-palmitoyl cysteine" evidence="1">
    <location>
        <position position="524"/>
    </location>
</feature>
<feature type="lipid moiety-binding region" description="S-palmitoyl cysteine" evidence="1">
    <location>
        <position position="1399"/>
    </location>
</feature>
<feature type="glycosylation site" description="N-linked (GlcNAc...) asparagine" evidence="4">
    <location>
        <position position="896"/>
    </location>
</feature>
<feature type="glycosylation site" description="N-linked (GlcNAc...) asparagine" evidence="4">
    <location>
        <position position="902"/>
    </location>
</feature>
<feature type="cross-link" description="Glycyl lysine isopeptide (Lys-Gly) (interchain with G-Cter in ubiquitin)" evidence="1">
    <location>
        <position position="688"/>
    </location>
</feature>
<name>CFTR_MUSPF</name>
<protein>
    <recommendedName>
        <fullName evidence="1">Cystic fibrosis transmembrane conductance regulator</fullName>
        <shortName>CFTR</shortName>
    </recommendedName>
    <alternativeName>
        <fullName>ATP-binding cassette sub-family C member 7</fullName>
    </alternativeName>
    <alternativeName>
        <fullName>Channel conductance-controlling ATPase</fullName>
        <ecNumber evidence="1">5.6.1.6</ecNumber>
    </alternativeName>
    <alternativeName>
        <fullName>cAMP-dependent chloride channel</fullName>
    </alternativeName>
</protein>